<reference key="1">
    <citation type="journal article" date="2003" name="Toxicon">
        <title>Molecular cloning and characterization of Phoneutria nigriventer toxins active on calcium channels.</title>
        <authorList>
            <person name="Cardoso F.C."/>
            <person name="Pacifico L.G."/>
            <person name="Carvalho D.C."/>
            <person name="Victoria J.M.N."/>
            <person name="Neves A.L.G."/>
            <person name="Chavez-Olortegui C."/>
            <person name="Gomez M.V."/>
            <person name="Kalapothakis E."/>
        </authorList>
    </citation>
    <scope>NUCLEOTIDE SEQUENCE [MRNA]</scope>
    <source>
        <tissue>Venom gland</tissue>
    </source>
</reference>
<accession>P0C2S8</accession>
<organism>
    <name type="scientific">Phoneutria nigriventer</name>
    <name type="common">Brazilian armed spider</name>
    <name type="synonym">Ctenus nigriventer</name>
    <dbReference type="NCBI Taxonomy" id="6918"/>
    <lineage>
        <taxon>Eukaryota</taxon>
        <taxon>Metazoa</taxon>
        <taxon>Ecdysozoa</taxon>
        <taxon>Arthropoda</taxon>
        <taxon>Chelicerata</taxon>
        <taxon>Arachnida</taxon>
        <taxon>Araneae</taxon>
        <taxon>Araneomorphae</taxon>
        <taxon>Entelegynae</taxon>
        <taxon>Lycosoidea</taxon>
        <taxon>Ctenidae</taxon>
        <taxon>Phoneutria</taxon>
    </lineage>
</organism>
<protein>
    <recommendedName>
        <fullName>U12-ctenitoxin-Pn1a</fullName>
        <shortName>U12-CNTX-Pn1a</shortName>
    </recommendedName>
    <alternativeName>
        <fullName>Neurotoxin Pn3-6B</fullName>
    </alternativeName>
</protein>
<sequence length="100" mass="11305">MKYRIFKMKYTLLFLSVIALVHIFAVEAKDEPESDALVPQERGCLDIGKTCKDDCECCGCGNVCYCPFDWFGGKWQPFGCSCAYGLKYVCAHKQKKCPNV</sequence>
<feature type="signal peptide" evidence="2">
    <location>
        <begin position="1"/>
        <end position="28"/>
    </location>
</feature>
<feature type="propeptide" id="PRO_0000284876" evidence="1">
    <location>
        <begin position="29"/>
        <end position="41"/>
    </location>
</feature>
<feature type="chain" id="PRO_0000284877" description="U12-ctenitoxin-Pn1a">
    <location>
        <begin position="43"/>
        <end position="100"/>
    </location>
</feature>
<feature type="disulfide bond" evidence="3">
    <location>
        <begin position="44"/>
        <end position="58"/>
    </location>
</feature>
<feature type="disulfide bond" evidence="3">
    <location>
        <begin position="51"/>
        <end position="64"/>
    </location>
</feature>
<feature type="disulfide bond" evidence="3">
    <location>
        <begin position="57"/>
        <end position="82"/>
    </location>
</feature>
<feature type="disulfide bond" evidence="3">
    <location>
        <begin position="66"/>
        <end position="80"/>
    </location>
</feature>
<feature type="disulfide bond" evidence="3">
    <location>
        <begin position="90"/>
        <end position="97"/>
    </location>
</feature>
<comment type="function">
    <text>Probable neurotoxin.</text>
</comment>
<comment type="subcellular location">
    <subcellularLocation>
        <location evidence="1">Secreted</location>
    </subcellularLocation>
</comment>
<comment type="tissue specificity">
    <text>Expressed by the venom gland.</text>
</comment>
<comment type="domain">
    <text evidence="3">The presence of a 'disulfide through disulfide knot' structurally defines this protein as a knottin.</text>
</comment>
<comment type="similarity">
    <text evidence="3">Belongs to the neurotoxin 09 (Tx3-6) family.</text>
</comment>
<evidence type="ECO:0000250" key="1"/>
<evidence type="ECO:0000255" key="2"/>
<evidence type="ECO:0000305" key="3"/>
<keyword id="KW-1015">Disulfide bond</keyword>
<keyword id="KW-0960">Knottin</keyword>
<keyword id="KW-0528">Neurotoxin</keyword>
<keyword id="KW-0964">Secreted</keyword>
<keyword id="KW-0732">Signal</keyword>
<keyword id="KW-0800">Toxin</keyword>
<proteinExistence type="evidence at transcript level"/>
<name>TX90D_PHONI</name>
<dbReference type="SMR" id="P0C2S8"/>
<dbReference type="ArachnoServer" id="AS000267">
    <property type="toxin name" value="U12-ctenitoxin-Pn1a"/>
</dbReference>
<dbReference type="GO" id="GO:0005576">
    <property type="term" value="C:extracellular region"/>
    <property type="evidence" value="ECO:0007669"/>
    <property type="project" value="UniProtKB-SubCell"/>
</dbReference>
<dbReference type="GO" id="GO:0090729">
    <property type="term" value="F:toxin activity"/>
    <property type="evidence" value="ECO:0007669"/>
    <property type="project" value="UniProtKB-KW"/>
</dbReference>